<accession>Q9Y530</accession>
<accession>A6NEK4</accession>
<accession>A8K4H4</accession>
<accession>Q96F23</accession>
<proteinExistence type="evidence at protein level"/>
<protein>
    <recommendedName>
        <fullName evidence="8">ADP-ribose glycohydrolase OARD1</fullName>
    </recommendedName>
    <alternativeName>
        <fullName>O-acetyl-ADP-ribose deacetylase 1</fullName>
        <ecNumber evidence="9">3.5.1.-</ecNumber>
    </alternativeName>
    <alternativeName>
        <fullName evidence="7">Terminal ADP-ribose protein glycohydrolase 1</fullName>
    </alternativeName>
    <alternativeName>
        <fullName evidence="8">[Protein ADP-ribosylglutamate] hydrolase OARD1</fullName>
        <ecNumber evidence="3 4">3.2.2.-</ecNumber>
    </alternativeName>
</protein>
<keyword id="KW-0002">3D-structure</keyword>
<keyword id="KW-0007">Acetylation</keyword>
<keyword id="KW-0158">Chromosome</keyword>
<keyword id="KW-0225">Disease variant</keyword>
<keyword id="KW-0378">Hydrolase</keyword>
<keyword id="KW-0539">Nucleus</keyword>
<keyword id="KW-0597">Phosphoprotein</keyword>
<keyword id="KW-1267">Proteomics identification</keyword>
<keyword id="KW-1185">Reference proteome</keyword>
<gene>
    <name evidence="10" type="primary">OARD1</name>
    <name evidence="10" type="synonym">C6orf130</name>
    <name evidence="7" type="synonym">TARG1</name>
</gene>
<comment type="function">
    <text evidence="2 3 4">ADP-ribose glycohydrolase that hydrolyzes ADP-ribose and acts on different substrates, such as proteins ADP-ribosylated on glutamate and O-acetyl-ADP-D-ribose (PubMed:21849506, PubMed:23474714, PubMed:23481255). Specifically acts as a glutamate mono-ADP-ribosylhydrolase by mediating the removal of mono-ADP-ribose attached to glutamate residues on proteins (PubMed:23474714, PubMed:23481255). Does not act on poly-ADP-ribosylated proteins: the poly-ADP-ribose chain of poly-ADP-ribosylated glutamate residues must by hydrolyzed into mono-ADP-ribosylated glutamate by PARG to become a substrate for OARD1 (PubMed:23481255). Deacetylates O-acetyl-ADP ribose, a signaling molecule generated by the deacetylation of acetylated lysine residues in histones and other proteins (PubMed:21849506). Catalyzes the deacylation of O-acetyl-ADP-ribose, O-propionyl-ADP-ribose and O-butyryl-ADP-ribose, yielding ADP-ribose plus acetate, propionate and butyrate, respectively (PubMed:21849506).</text>
</comment>
<comment type="catalytic activity">
    <reaction evidence="9">
        <text>2''-O-acetyl-ADP-D-ribose + H2O = ADP-D-ribose + acetate + H(+)</text>
        <dbReference type="Rhea" id="RHEA:57060"/>
        <dbReference type="ChEBI" id="CHEBI:15377"/>
        <dbReference type="ChEBI" id="CHEBI:15378"/>
        <dbReference type="ChEBI" id="CHEBI:30089"/>
        <dbReference type="ChEBI" id="CHEBI:57967"/>
        <dbReference type="ChEBI" id="CHEBI:83767"/>
    </reaction>
    <physiologicalReaction direction="left-to-right" evidence="9">
        <dbReference type="Rhea" id="RHEA:57061"/>
    </physiologicalReaction>
</comment>
<comment type="catalytic activity">
    <reaction evidence="3 4">
        <text>5-O-(ADP-D-ribosyl)-L-glutamyl-[protein] + H2O = L-glutamyl-[protein] + ADP-D-ribose + H(+)</text>
        <dbReference type="Rhea" id="RHEA:58248"/>
        <dbReference type="Rhea" id="RHEA-COMP:10208"/>
        <dbReference type="Rhea" id="RHEA-COMP:15089"/>
        <dbReference type="ChEBI" id="CHEBI:15377"/>
        <dbReference type="ChEBI" id="CHEBI:15378"/>
        <dbReference type="ChEBI" id="CHEBI:29973"/>
        <dbReference type="ChEBI" id="CHEBI:57967"/>
        <dbReference type="ChEBI" id="CHEBI:142540"/>
    </reaction>
    <physiologicalReaction direction="left-to-right" evidence="3 4">
        <dbReference type="Rhea" id="RHEA:58249"/>
    </physiologicalReaction>
</comment>
<comment type="catalytic activity">
    <reaction evidence="6">
        <text>alpha-NAD(+) + H2O = ADP-D-ribose + nicotinamide + H(+)</text>
        <dbReference type="Rhea" id="RHEA:68792"/>
        <dbReference type="ChEBI" id="CHEBI:15377"/>
        <dbReference type="ChEBI" id="CHEBI:15378"/>
        <dbReference type="ChEBI" id="CHEBI:17154"/>
        <dbReference type="ChEBI" id="CHEBI:57967"/>
        <dbReference type="ChEBI" id="CHEBI:77017"/>
    </reaction>
</comment>
<comment type="activity regulation">
    <text evidence="2">Subject to competitive inhibition by the product ADP-ribose.</text>
</comment>
<comment type="biophysicochemical properties">
    <kinetics>
        <KM evidence="2">182 uM for O-acetyl-ADP-ribose</KM>
    </kinetics>
</comment>
<comment type="interaction">
    <interactant intactId="EBI-8502288">
        <id>Q9Y530</id>
    </interactant>
    <interactant intactId="EBI-355676">
        <id>P09874</id>
        <label>PARP1</label>
    </interactant>
    <organismsDiffer>false</organismsDiffer>
    <experiments>5</experiments>
</comment>
<comment type="interaction">
    <interactant intactId="EBI-8502288">
        <id>Q9Y530</id>
    </interactant>
    <interactant intactId="EBI-2857573">
        <id>Q53GL7</id>
        <label>PARP10</label>
    </interactant>
    <organismsDiffer>false</organismsDiffer>
    <experiments>3</experiments>
</comment>
<comment type="interaction">
    <interactant intactId="EBI-8502288">
        <id>Q9Y530</id>
    </interactant>
    <interactant intactId="EBI-79165">
        <id>Q9NRD5</id>
        <label>PICK1</label>
    </interactant>
    <organismsDiffer>false</organismsDiffer>
    <experiments>3</experiments>
</comment>
<comment type="interaction">
    <interactant intactId="EBI-8502288">
        <id>Q9Y530</id>
    </interactant>
    <interactant intactId="EBI-1105254">
        <id>O95271</id>
        <label>TNKS</label>
    </interactant>
    <organismsDiffer>false</organismsDiffer>
    <experiments>3</experiments>
</comment>
<comment type="subcellular location">
    <subcellularLocation>
        <location evidence="4 5">Nucleus</location>
        <location evidence="4 5">Nucleoplasm</location>
    </subcellularLocation>
    <subcellularLocation>
        <location evidence="5">Nucleus</location>
        <location evidence="5">Nucleolus</location>
    </subcellularLocation>
    <subcellularLocation>
        <location evidence="4">Chromosome</location>
    </subcellularLocation>
    <text evidence="4 5">Localizes both in the nucleoplasm and in the nucleolus (PubMed:29712969). Relocalizes to the nucleoplasm in response to DNA damage (PubMed:29712969). Recruited to DNA lesion regions following DNA damage (PubMed:23481255).</text>
</comment>
<comment type="tissue specificity">
    <text evidence="4">Ubiquitous.</text>
</comment>
<comment type="disease">
    <text evidence="4">Defects in OARD1 are found in patients with severe neurodegeneration (PubMed:23481255). Defects were found in an extended consanguineous family with several affected cases in two generations (PubMed:23481255).</text>
</comment>
<evidence type="ECO:0000255" key="1">
    <source>
        <dbReference type="PROSITE-ProRule" id="PRU00490"/>
    </source>
</evidence>
<evidence type="ECO:0000269" key="2">
    <source>
    </source>
</evidence>
<evidence type="ECO:0000269" key="3">
    <source>
    </source>
</evidence>
<evidence type="ECO:0000269" key="4">
    <source>
    </source>
</evidence>
<evidence type="ECO:0000269" key="5">
    <source>
    </source>
</evidence>
<evidence type="ECO:0000269" key="6">
    <source>
    </source>
</evidence>
<evidence type="ECO:0000303" key="7">
    <source>
    </source>
</evidence>
<evidence type="ECO:0000305" key="8"/>
<evidence type="ECO:0000305" key="9">
    <source>
    </source>
</evidence>
<evidence type="ECO:0000312" key="10">
    <source>
        <dbReference type="HGNC" id="HGNC:21257"/>
    </source>
</evidence>
<evidence type="ECO:0007744" key="11">
    <source>
        <dbReference type="PDB" id="4J5Q"/>
    </source>
</evidence>
<evidence type="ECO:0007744" key="12">
    <source>
        <dbReference type="PDB" id="4J5R"/>
    </source>
</evidence>
<evidence type="ECO:0007744" key="13">
    <source>
        <dbReference type="PDB" id="4J5S"/>
    </source>
</evidence>
<evidence type="ECO:0007744" key="14">
    <source>
    </source>
</evidence>
<evidence type="ECO:0007744" key="15">
    <source>
    </source>
</evidence>
<evidence type="ECO:0007744" key="16">
    <source>
    </source>
</evidence>
<evidence type="ECO:0007829" key="17">
    <source>
        <dbReference type="PDB" id="2LGR"/>
    </source>
</evidence>
<evidence type="ECO:0007829" key="18">
    <source>
        <dbReference type="PDB" id="4J5Q"/>
    </source>
</evidence>
<evidence type="ECO:0007829" key="19">
    <source>
        <dbReference type="PDB" id="4J5R"/>
    </source>
</evidence>
<dbReference type="EC" id="3.5.1.-" evidence="9"/>
<dbReference type="EC" id="3.2.2.-" evidence="3 4"/>
<dbReference type="EMBL" id="AK290939">
    <property type="protein sequence ID" value="BAF83628.1"/>
    <property type="molecule type" value="mRNA"/>
</dbReference>
<dbReference type="EMBL" id="AK313361">
    <property type="protein sequence ID" value="BAG36161.1"/>
    <property type="molecule type" value="mRNA"/>
</dbReference>
<dbReference type="EMBL" id="AL031778">
    <property type="status" value="NOT_ANNOTATED_CDS"/>
    <property type="molecule type" value="Genomic_DNA"/>
</dbReference>
<dbReference type="EMBL" id="CH471081">
    <property type="protein sequence ID" value="EAX04011.1"/>
    <property type="molecule type" value="Genomic_DNA"/>
</dbReference>
<dbReference type="EMBL" id="BC011709">
    <property type="protein sequence ID" value="AAH11709.1"/>
    <property type="molecule type" value="mRNA"/>
</dbReference>
<dbReference type="CCDS" id="CCDS34445.1"/>
<dbReference type="RefSeq" id="NP_001316613.1">
    <property type="nucleotide sequence ID" value="NM_001329684.2"/>
</dbReference>
<dbReference type="RefSeq" id="NP_001316614.1">
    <property type="nucleotide sequence ID" value="NM_001329685.1"/>
</dbReference>
<dbReference type="RefSeq" id="NP_001316615.1">
    <property type="nucleotide sequence ID" value="NM_001329686.2"/>
</dbReference>
<dbReference type="RefSeq" id="NP_001316617.1">
    <property type="nucleotide sequence ID" value="NM_001329688.2"/>
</dbReference>
<dbReference type="RefSeq" id="NP_659500.1">
    <property type="nucleotide sequence ID" value="NM_145063.4"/>
</dbReference>
<dbReference type="PDB" id="2EEE">
    <property type="method" value="NMR"/>
    <property type="chains" value="A=11-152"/>
</dbReference>
<dbReference type="PDB" id="2L8R">
    <property type="method" value="NMR"/>
    <property type="chains" value="A=3-152"/>
</dbReference>
<dbReference type="PDB" id="2LGR">
    <property type="method" value="NMR"/>
    <property type="chains" value="A=2-152"/>
</dbReference>
<dbReference type="PDB" id="4J5Q">
    <property type="method" value="X-ray"/>
    <property type="resolution" value="1.35 A"/>
    <property type="chains" value="A=7-152"/>
</dbReference>
<dbReference type="PDB" id="4J5R">
    <property type="method" value="X-ray"/>
    <property type="resolution" value="1.25 A"/>
    <property type="chains" value="A/B=11-152"/>
</dbReference>
<dbReference type="PDB" id="4J5S">
    <property type="method" value="X-ray"/>
    <property type="resolution" value="1.55 A"/>
    <property type="chains" value="A/B/C/D=11-152"/>
</dbReference>
<dbReference type="PDBsum" id="2EEE"/>
<dbReference type="PDBsum" id="2L8R"/>
<dbReference type="PDBsum" id="2LGR"/>
<dbReference type="PDBsum" id="4J5Q"/>
<dbReference type="PDBsum" id="4J5R"/>
<dbReference type="PDBsum" id="4J5S"/>
<dbReference type="BMRB" id="Q9Y530"/>
<dbReference type="SMR" id="Q9Y530"/>
<dbReference type="BioGRID" id="128727">
    <property type="interactions" value="23"/>
</dbReference>
<dbReference type="FunCoup" id="Q9Y530">
    <property type="interactions" value="1180"/>
</dbReference>
<dbReference type="IntAct" id="Q9Y530">
    <property type="interactions" value="5"/>
</dbReference>
<dbReference type="MINT" id="Q9Y530"/>
<dbReference type="STRING" id="9606.ENSP00000420484"/>
<dbReference type="ChEMBL" id="CHEMBL4295991"/>
<dbReference type="GlyGen" id="Q9Y530">
    <property type="glycosylation" value="1 site, 1 O-linked glycan (1 site)"/>
</dbReference>
<dbReference type="iPTMnet" id="Q9Y530"/>
<dbReference type="PhosphoSitePlus" id="Q9Y530"/>
<dbReference type="BioMuta" id="OARD1"/>
<dbReference type="DMDM" id="38258957"/>
<dbReference type="jPOST" id="Q9Y530"/>
<dbReference type="MassIVE" id="Q9Y530"/>
<dbReference type="PaxDb" id="9606-ENSP00000420484"/>
<dbReference type="PeptideAtlas" id="Q9Y530"/>
<dbReference type="ProteomicsDB" id="86280"/>
<dbReference type="Pumba" id="Q9Y530"/>
<dbReference type="Antibodypedia" id="29984">
    <property type="antibodies" value="48 antibodies from 12 providers"/>
</dbReference>
<dbReference type="DNASU" id="221443"/>
<dbReference type="Ensembl" id="ENST00000424266.7">
    <property type="protein sequence ID" value="ENSP00000416829.2"/>
    <property type="gene ID" value="ENSG00000124596.17"/>
</dbReference>
<dbReference type="Ensembl" id="ENST00000463088.5">
    <property type="protein sequence ID" value="ENSP00000420193.1"/>
    <property type="gene ID" value="ENSG00000124596.17"/>
</dbReference>
<dbReference type="Ensembl" id="ENST00000468811.5">
    <property type="protein sequence ID" value="ENSP00000420601.1"/>
    <property type="gene ID" value="ENSG00000124596.17"/>
</dbReference>
<dbReference type="Ensembl" id="ENST00000479950.5">
    <property type="protein sequence ID" value="ENSP00000420484.1"/>
    <property type="gene ID" value="ENSG00000124596.17"/>
</dbReference>
<dbReference type="GeneID" id="221443"/>
<dbReference type="KEGG" id="hsa:221443"/>
<dbReference type="MANE-Select" id="ENST00000424266.7">
    <property type="protein sequence ID" value="ENSP00000416829.2"/>
    <property type="RefSeq nucleotide sequence ID" value="NM_001329686.2"/>
    <property type="RefSeq protein sequence ID" value="NP_001316615.1"/>
</dbReference>
<dbReference type="UCSC" id="uc003opm.4">
    <property type="organism name" value="human"/>
</dbReference>
<dbReference type="AGR" id="HGNC:21257"/>
<dbReference type="CTD" id="221443"/>
<dbReference type="DisGeNET" id="221443"/>
<dbReference type="GeneCards" id="OARD1"/>
<dbReference type="HGNC" id="HGNC:21257">
    <property type="gene designation" value="OARD1"/>
</dbReference>
<dbReference type="HPA" id="ENSG00000124596">
    <property type="expression patterns" value="Low tissue specificity"/>
</dbReference>
<dbReference type="MIM" id="614393">
    <property type="type" value="gene"/>
</dbReference>
<dbReference type="neXtProt" id="NX_Q9Y530"/>
<dbReference type="OpenTargets" id="ENSG00000124596"/>
<dbReference type="PharmGKB" id="PA134879529"/>
<dbReference type="VEuPathDB" id="HostDB:ENSG00000124596"/>
<dbReference type="eggNOG" id="ENOG502RXG1">
    <property type="taxonomic scope" value="Eukaryota"/>
</dbReference>
<dbReference type="GeneTree" id="ENSGT00390000006988"/>
<dbReference type="InParanoid" id="Q9Y530"/>
<dbReference type="OMA" id="CHCLKNG"/>
<dbReference type="OrthoDB" id="2155246at2759"/>
<dbReference type="PAN-GO" id="Q9Y530">
    <property type="GO annotations" value="1 GO annotation based on evolutionary models"/>
</dbReference>
<dbReference type="PhylomeDB" id="Q9Y530"/>
<dbReference type="TreeFam" id="TF324128"/>
<dbReference type="PathwayCommons" id="Q9Y530"/>
<dbReference type="SABIO-RK" id="Q9Y530"/>
<dbReference type="SignaLink" id="Q9Y530"/>
<dbReference type="BioGRID-ORCS" id="221443">
    <property type="hits" value="17 hits in 1155 CRISPR screens"/>
</dbReference>
<dbReference type="EvolutionaryTrace" id="Q9Y530"/>
<dbReference type="GenomeRNAi" id="221443"/>
<dbReference type="Pharos" id="Q9Y530">
    <property type="development level" value="Tdark"/>
</dbReference>
<dbReference type="PRO" id="PR:Q9Y530"/>
<dbReference type="Proteomes" id="UP000005640">
    <property type="component" value="Chromosome 6"/>
</dbReference>
<dbReference type="RNAct" id="Q9Y530">
    <property type="molecule type" value="protein"/>
</dbReference>
<dbReference type="Bgee" id="ENSG00000124596">
    <property type="expression patterns" value="Expressed in primordial germ cell in gonad and 195 other cell types or tissues"/>
</dbReference>
<dbReference type="ExpressionAtlas" id="Q9Y530">
    <property type="expression patterns" value="baseline and differential"/>
</dbReference>
<dbReference type="GO" id="GO:0005730">
    <property type="term" value="C:nucleolus"/>
    <property type="evidence" value="ECO:0000314"/>
    <property type="project" value="UniProtKB"/>
</dbReference>
<dbReference type="GO" id="GO:0005654">
    <property type="term" value="C:nucleoplasm"/>
    <property type="evidence" value="ECO:0000314"/>
    <property type="project" value="UniProtKB"/>
</dbReference>
<dbReference type="GO" id="GO:0090734">
    <property type="term" value="C:site of DNA damage"/>
    <property type="evidence" value="ECO:0000314"/>
    <property type="project" value="UniProtKB"/>
</dbReference>
<dbReference type="GO" id="GO:0047407">
    <property type="term" value="F:ADP-ribosyl-[dinitrogen reductase] hydrolase activity"/>
    <property type="evidence" value="ECO:0000318"/>
    <property type="project" value="GO_Central"/>
</dbReference>
<dbReference type="GO" id="GO:0140293">
    <property type="term" value="F:ADP-ribosylglutamate hydrolase activity"/>
    <property type="evidence" value="ECO:0000314"/>
    <property type="project" value="UniProtKB"/>
</dbReference>
<dbReference type="GO" id="GO:0061463">
    <property type="term" value="F:O-acetyl-ADP-ribose deacetylase activity"/>
    <property type="evidence" value="ECO:0000314"/>
    <property type="project" value="UniProtKB"/>
</dbReference>
<dbReference type="GO" id="GO:0001883">
    <property type="term" value="F:purine nucleoside binding"/>
    <property type="evidence" value="ECO:0000314"/>
    <property type="project" value="UniProtKB"/>
</dbReference>
<dbReference type="GO" id="GO:0006974">
    <property type="term" value="P:DNA damage response"/>
    <property type="evidence" value="ECO:0000315"/>
    <property type="project" value="UniProtKB"/>
</dbReference>
<dbReference type="GO" id="GO:0140291">
    <property type="term" value="P:peptidyl-glutamate ADP-deribosylation"/>
    <property type="evidence" value="ECO:0000314"/>
    <property type="project" value="UniProtKB"/>
</dbReference>
<dbReference type="GO" id="GO:0051725">
    <property type="term" value="P:protein de-ADP-ribosylation"/>
    <property type="evidence" value="ECO:0000314"/>
    <property type="project" value="UniProtKB"/>
</dbReference>
<dbReference type="GO" id="GO:0042278">
    <property type="term" value="P:purine nucleoside metabolic process"/>
    <property type="evidence" value="ECO:0000314"/>
    <property type="project" value="UniProtKB"/>
</dbReference>
<dbReference type="CDD" id="cd02901">
    <property type="entry name" value="Macro_Poa1p-like"/>
    <property type="match status" value="1"/>
</dbReference>
<dbReference type="FunFam" id="3.40.220.10:FF:000007">
    <property type="entry name" value="O-acetyl-ADP-ribose deacetylase 1"/>
    <property type="match status" value="1"/>
</dbReference>
<dbReference type="Gene3D" id="3.40.220.10">
    <property type="entry name" value="Leucine Aminopeptidase, subunit E, domain 1"/>
    <property type="match status" value="1"/>
</dbReference>
<dbReference type="InterPro" id="IPR050892">
    <property type="entry name" value="ADP-ribose_metab_enzymes"/>
</dbReference>
<dbReference type="InterPro" id="IPR002589">
    <property type="entry name" value="Macro_dom"/>
</dbReference>
<dbReference type="InterPro" id="IPR043472">
    <property type="entry name" value="Macro_dom-like"/>
</dbReference>
<dbReference type="PANTHER" id="PTHR12521:SF0">
    <property type="entry name" value="ADP-RIBOSE GLYCOHYDROLASE OARD1"/>
    <property type="match status" value="1"/>
</dbReference>
<dbReference type="PANTHER" id="PTHR12521">
    <property type="entry name" value="PROTEIN C6ORF130"/>
    <property type="match status" value="1"/>
</dbReference>
<dbReference type="Pfam" id="PF01661">
    <property type="entry name" value="Macro"/>
    <property type="match status" value="1"/>
</dbReference>
<dbReference type="SMART" id="SM00506">
    <property type="entry name" value="A1pp"/>
    <property type="match status" value="1"/>
</dbReference>
<dbReference type="SUPFAM" id="SSF52949">
    <property type="entry name" value="Macro domain-like"/>
    <property type="match status" value="1"/>
</dbReference>
<dbReference type="PROSITE" id="PS51154">
    <property type="entry name" value="MACRO"/>
    <property type="match status" value="1"/>
</dbReference>
<name>OARD1_HUMAN</name>
<sequence length="152" mass="17025">MASSLNEDPEGSRITYVKGDLFACPKTDSLAHCISEDCRMGAGIAVLFKKKFGGVQELLNQQKKSGEVAVLKRDGRYIYYLITKKRASHKPTYENLQKSLEAMKSHCLKNGVTDLSMPRIGCGLDRLQWENVSAMIEEVFEATDIKITVYTL</sequence>
<organism>
    <name type="scientific">Homo sapiens</name>
    <name type="common">Human</name>
    <dbReference type="NCBI Taxonomy" id="9606"/>
    <lineage>
        <taxon>Eukaryota</taxon>
        <taxon>Metazoa</taxon>
        <taxon>Chordata</taxon>
        <taxon>Craniata</taxon>
        <taxon>Vertebrata</taxon>
        <taxon>Euteleostomi</taxon>
        <taxon>Mammalia</taxon>
        <taxon>Eutheria</taxon>
        <taxon>Euarchontoglires</taxon>
        <taxon>Primates</taxon>
        <taxon>Haplorrhini</taxon>
        <taxon>Catarrhini</taxon>
        <taxon>Hominidae</taxon>
        <taxon>Homo</taxon>
    </lineage>
</organism>
<reference key="1">
    <citation type="journal article" date="2004" name="Nat. Genet.">
        <title>Complete sequencing and characterization of 21,243 full-length human cDNAs.</title>
        <authorList>
            <person name="Ota T."/>
            <person name="Suzuki Y."/>
            <person name="Nishikawa T."/>
            <person name="Otsuki T."/>
            <person name="Sugiyama T."/>
            <person name="Irie R."/>
            <person name="Wakamatsu A."/>
            <person name="Hayashi K."/>
            <person name="Sato H."/>
            <person name="Nagai K."/>
            <person name="Kimura K."/>
            <person name="Makita H."/>
            <person name="Sekine M."/>
            <person name="Obayashi M."/>
            <person name="Nishi T."/>
            <person name="Shibahara T."/>
            <person name="Tanaka T."/>
            <person name="Ishii S."/>
            <person name="Yamamoto J."/>
            <person name="Saito K."/>
            <person name="Kawai Y."/>
            <person name="Isono Y."/>
            <person name="Nakamura Y."/>
            <person name="Nagahari K."/>
            <person name="Murakami K."/>
            <person name="Yasuda T."/>
            <person name="Iwayanagi T."/>
            <person name="Wagatsuma M."/>
            <person name="Shiratori A."/>
            <person name="Sudo H."/>
            <person name="Hosoiri T."/>
            <person name="Kaku Y."/>
            <person name="Kodaira H."/>
            <person name="Kondo H."/>
            <person name="Sugawara M."/>
            <person name="Takahashi M."/>
            <person name="Kanda K."/>
            <person name="Yokoi T."/>
            <person name="Furuya T."/>
            <person name="Kikkawa E."/>
            <person name="Omura Y."/>
            <person name="Abe K."/>
            <person name="Kamihara K."/>
            <person name="Katsuta N."/>
            <person name="Sato K."/>
            <person name="Tanikawa M."/>
            <person name="Yamazaki M."/>
            <person name="Ninomiya K."/>
            <person name="Ishibashi T."/>
            <person name="Yamashita H."/>
            <person name="Murakawa K."/>
            <person name="Fujimori K."/>
            <person name="Tanai H."/>
            <person name="Kimata M."/>
            <person name="Watanabe M."/>
            <person name="Hiraoka S."/>
            <person name="Chiba Y."/>
            <person name="Ishida S."/>
            <person name="Ono Y."/>
            <person name="Takiguchi S."/>
            <person name="Watanabe S."/>
            <person name="Yosida M."/>
            <person name="Hotuta T."/>
            <person name="Kusano J."/>
            <person name="Kanehori K."/>
            <person name="Takahashi-Fujii A."/>
            <person name="Hara H."/>
            <person name="Tanase T.-O."/>
            <person name="Nomura Y."/>
            <person name="Togiya S."/>
            <person name="Komai F."/>
            <person name="Hara R."/>
            <person name="Takeuchi K."/>
            <person name="Arita M."/>
            <person name="Imose N."/>
            <person name="Musashino K."/>
            <person name="Yuuki H."/>
            <person name="Oshima A."/>
            <person name="Sasaki N."/>
            <person name="Aotsuka S."/>
            <person name="Yoshikawa Y."/>
            <person name="Matsunawa H."/>
            <person name="Ichihara T."/>
            <person name="Shiohata N."/>
            <person name="Sano S."/>
            <person name="Moriya S."/>
            <person name="Momiyama H."/>
            <person name="Satoh N."/>
            <person name="Takami S."/>
            <person name="Terashima Y."/>
            <person name="Suzuki O."/>
            <person name="Nakagawa S."/>
            <person name="Senoh A."/>
            <person name="Mizoguchi H."/>
            <person name="Goto Y."/>
            <person name="Shimizu F."/>
            <person name="Wakebe H."/>
            <person name="Hishigaki H."/>
            <person name="Watanabe T."/>
            <person name="Sugiyama A."/>
            <person name="Takemoto M."/>
            <person name="Kawakami B."/>
            <person name="Yamazaki M."/>
            <person name="Watanabe K."/>
            <person name="Kumagai A."/>
            <person name="Itakura S."/>
            <person name="Fukuzumi Y."/>
            <person name="Fujimori Y."/>
            <person name="Komiyama M."/>
            <person name="Tashiro H."/>
            <person name="Tanigami A."/>
            <person name="Fujiwara T."/>
            <person name="Ono T."/>
            <person name="Yamada K."/>
            <person name="Fujii Y."/>
            <person name="Ozaki K."/>
            <person name="Hirao M."/>
            <person name="Ohmori Y."/>
            <person name="Kawabata A."/>
            <person name="Hikiji T."/>
            <person name="Kobatake N."/>
            <person name="Inagaki H."/>
            <person name="Ikema Y."/>
            <person name="Okamoto S."/>
            <person name="Okitani R."/>
            <person name="Kawakami T."/>
            <person name="Noguchi S."/>
            <person name="Itoh T."/>
            <person name="Shigeta K."/>
            <person name="Senba T."/>
            <person name="Matsumura K."/>
            <person name="Nakajima Y."/>
            <person name="Mizuno T."/>
            <person name="Morinaga M."/>
            <person name="Sasaki M."/>
            <person name="Togashi T."/>
            <person name="Oyama M."/>
            <person name="Hata H."/>
            <person name="Watanabe M."/>
            <person name="Komatsu T."/>
            <person name="Mizushima-Sugano J."/>
            <person name="Satoh T."/>
            <person name="Shirai Y."/>
            <person name="Takahashi Y."/>
            <person name="Nakagawa K."/>
            <person name="Okumura K."/>
            <person name="Nagase T."/>
            <person name="Nomura N."/>
            <person name="Kikuchi H."/>
            <person name="Masuho Y."/>
            <person name="Yamashita R."/>
            <person name="Nakai K."/>
            <person name="Yada T."/>
            <person name="Nakamura Y."/>
            <person name="Ohara O."/>
            <person name="Isogai T."/>
            <person name="Sugano S."/>
        </authorList>
    </citation>
    <scope>NUCLEOTIDE SEQUENCE [LARGE SCALE MRNA]</scope>
</reference>
<reference key="2">
    <citation type="journal article" date="2003" name="Nature">
        <title>The DNA sequence and analysis of human chromosome 6.</title>
        <authorList>
            <person name="Mungall A.J."/>
            <person name="Palmer S.A."/>
            <person name="Sims S.K."/>
            <person name="Edwards C.A."/>
            <person name="Ashurst J.L."/>
            <person name="Wilming L."/>
            <person name="Jones M.C."/>
            <person name="Horton R."/>
            <person name="Hunt S.E."/>
            <person name="Scott C.E."/>
            <person name="Gilbert J.G.R."/>
            <person name="Clamp M.E."/>
            <person name="Bethel G."/>
            <person name="Milne S."/>
            <person name="Ainscough R."/>
            <person name="Almeida J.P."/>
            <person name="Ambrose K.D."/>
            <person name="Andrews T.D."/>
            <person name="Ashwell R.I.S."/>
            <person name="Babbage A.K."/>
            <person name="Bagguley C.L."/>
            <person name="Bailey J."/>
            <person name="Banerjee R."/>
            <person name="Barker D.J."/>
            <person name="Barlow K.F."/>
            <person name="Bates K."/>
            <person name="Beare D.M."/>
            <person name="Beasley H."/>
            <person name="Beasley O."/>
            <person name="Bird C.P."/>
            <person name="Blakey S.E."/>
            <person name="Bray-Allen S."/>
            <person name="Brook J."/>
            <person name="Brown A.J."/>
            <person name="Brown J.Y."/>
            <person name="Burford D.C."/>
            <person name="Burrill W."/>
            <person name="Burton J."/>
            <person name="Carder C."/>
            <person name="Carter N.P."/>
            <person name="Chapman J.C."/>
            <person name="Clark S.Y."/>
            <person name="Clark G."/>
            <person name="Clee C.M."/>
            <person name="Clegg S."/>
            <person name="Cobley V."/>
            <person name="Collier R.E."/>
            <person name="Collins J.E."/>
            <person name="Colman L.K."/>
            <person name="Corby N.R."/>
            <person name="Coville G.J."/>
            <person name="Culley K.M."/>
            <person name="Dhami P."/>
            <person name="Davies J."/>
            <person name="Dunn M."/>
            <person name="Earthrowl M.E."/>
            <person name="Ellington A.E."/>
            <person name="Evans K.A."/>
            <person name="Faulkner L."/>
            <person name="Francis M.D."/>
            <person name="Frankish A."/>
            <person name="Frankland J."/>
            <person name="French L."/>
            <person name="Garner P."/>
            <person name="Garnett J."/>
            <person name="Ghori M.J."/>
            <person name="Gilby L.M."/>
            <person name="Gillson C.J."/>
            <person name="Glithero R.J."/>
            <person name="Grafham D.V."/>
            <person name="Grant M."/>
            <person name="Gribble S."/>
            <person name="Griffiths C."/>
            <person name="Griffiths M.N.D."/>
            <person name="Hall R."/>
            <person name="Halls K.S."/>
            <person name="Hammond S."/>
            <person name="Harley J.L."/>
            <person name="Hart E.A."/>
            <person name="Heath P.D."/>
            <person name="Heathcott R."/>
            <person name="Holmes S.J."/>
            <person name="Howden P.J."/>
            <person name="Howe K.L."/>
            <person name="Howell G.R."/>
            <person name="Huckle E."/>
            <person name="Humphray S.J."/>
            <person name="Humphries M.D."/>
            <person name="Hunt A.R."/>
            <person name="Johnson C.M."/>
            <person name="Joy A.A."/>
            <person name="Kay M."/>
            <person name="Keenan S.J."/>
            <person name="Kimberley A.M."/>
            <person name="King A."/>
            <person name="Laird G.K."/>
            <person name="Langford C."/>
            <person name="Lawlor S."/>
            <person name="Leongamornlert D.A."/>
            <person name="Leversha M."/>
            <person name="Lloyd C.R."/>
            <person name="Lloyd D.M."/>
            <person name="Loveland J.E."/>
            <person name="Lovell J."/>
            <person name="Martin S."/>
            <person name="Mashreghi-Mohammadi M."/>
            <person name="Maslen G.L."/>
            <person name="Matthews L."/>
            <person name="McCann O.T."/>
            <person name="McLaren S.J."/>
            <person name="McLay K."/>
            <person name="McMurray A."/>
            <person name="Moore M.J.F."/>
            <person name="Mullikin J.C."/>
            <person name="Niblett D."/>
            <person name="Nickerson T."/>
            <person name="Novik K.L."/>
            <person name="Oliver K."/>
            <person name="Overton-Larty E.K."/>
            <person name="Parker A."/>
            <person name="Patel R."/>
            <person name="Pearce A.V."/>
            <person name="Peck A.I."/>
            <person name="Phillimore B.J.C.T."/>
            <person name="Phillips S."/>
            <person name="Plumb R.W."/>
            <person name="Porter K.M."/>
            <person name="Ramsey Y."/>
            <person name="Ranby S.A."/>
            <person name="Rice C.M."/>
            <person name="Ross M.T."/>
            <person name="Searle S.M."/>
            <person name="Sehra H.K."/>
            <person name="Sheridan E."/>
            <person name="Skuce C.D."/>
            <person name="Smith S."/>
            <person name="Smith M."/>
            <person name="Spraggon L."/>
            <person name="Squares S.L."/>
            <person name="Steward C.A."/>
            <person name="Sycamore N."/>
            <person name="Tamlyn-Hall G."/>
            <person name="Tester J."/>
            <person name="Theaker A.J."/>
            <person name="Thomas D.W."/>
            <person name="Thorpe A."/>
            <person name="Tracey A."/>
            <person name="Tromans A."/>
            <person name="Tubby B."/>
            <person name="Wall M."/>
            <person name="Wallis J.M."/>
            <person name="West A.P."/>
            <person name="White S.S."/>
            <person name="Whitehead S.L."/>
            <person name="Whittaker H."/>
            <person name="Wild A."/>
            <person name="Willey D.J."/>
            <person name="Wilmer T.E."/>
            <person name="Wood J.M."/>
            <person name="Wray P.W."/>
            <person name="Wyatt J.C."/>
            <person name="Young L."/>
            <person name="Younger R.M."/>
            <person name="Bentley D.R."/>
            <person name="Coulson A."/>
            <person name="Durbin R.M."/>
            <person name="Hubbard T."/>
            <person name="Sulston J.E."/>
            <person name="Dunham I."/>
            <person name="Rogers J."/>
            <person name="Beck S."/>
        </authorList>
    </citation>
    <scope>NUCLEOTIDE SEQUENCE [LARGE SCALE GENOMIC DNA]</scope>
</reference>
<reference key="3">
    <citation type="submission" date="2005-07" db="EMBL/GenBank/DDBJ databases">
        <authorList>
            <person name="Mural R.J."/>
            <person name="Istrail S."/>
            <person name="Sutton G.G."/>
            <person name="Florea L."/>
            <person name="Halpern A.L."/>
            <person name="Mobarry C.M."/>
            <person name="Lippert R."/>
            <person name="Walenz B."/>
            <person name="Shatkay H."/>
            <person name="Dew I."/>
            <person name="Miller J.R."/>
            <person name="Flanigan M.J."/>
            <person name="Edwards N.J."/>
            <person name="Bolanos R."/>
            <person name="Fasulo D."/>
            <person name="Halldorsson B.V."/>
            <person name="Hannenhalli S."/>
            <person name="Turner R."/>
            <person name="Yooseph S."/>
            <person name="Lu F."/>
            <person name="Nusskern D.R."/>
            <person name="Shue B.C."/>
            <person name="Zheng X.H."/>
            <person name="Zhong F."/>
            <person name="Delcher A.L."/>
            <person name="Huson D.H."/>
            <person name="Kravitz S.A."/>
            <person name="Mouchard L."/>
            <person name="Reinert K."/>
            <person name="Remington K.A."/>
            <person name="Clark A.G."/>
            <person name="Waterman M.S."/>
            <person name="Eichler E.E."/>
            <person name="Adams M.D."/>
            <person name="Hunkapiller M.W."/>
            <person name="Myers E.W."/>
            <person name="Venter J.C."/>
        </authorList>
    </citation>
    <scope>NUCLEOTIDE SEQUENCE [LARGE SCALE GENOMIC DNA]</scope>
</reference>
<reference key="4">
    <citation type="journal article" date="2004" name="Genome Res.">
        <title>The status, quality, and expansion of the NIH full-length cDNA project: the Mammalian Gene Collection (MGC).</title>
        <authorList>
            <consortium name="The MGC Project Team"/>
        </authorList>
    </citation>
    <scope>NUCLEOTIDE SEQUENCE [LARGE SCALE MRNA]</scope>
    <source>
        <tissue>Lung</tissue>
    </source>
</reference>
<reference key="5">
    <citation type="journal article" date="2011" name="BMC Syst. Biol.">
        <title>Initial characterization of the human central proteome.</title>
        <authorList>
            <person name="Burkard T.R."/>
            <person name="Planyavsky M."/>
            <person name="Kaupe I."/>
            <person name="Breitwieser F.P."/>
            <person name="Buerckstuemmer T."/>
            <person name="Bennett K.L."/>
            <person name="Superti-Furga G."/>
            <person name="Colinge J."/>
        </authorList>
    </citation>
    <scope>IDENTIFICATION BY MASS SPECTROMETRY [LARGE SCALE ANALYSIS]</scope>
</reference>
<reference key="6">
    <citation type="journal article" date="2011" name="Sci. Signal.">
        <title>System-wide temporal characterization of the proteome and phosphoproteome of human embryonic stem cell differentiation.</title>
        <authorList>
            <person name="Rigbolt K.T."/>
            <person name="Prokhorova T.A."/>
            <person name="Akimov V."/>
            <person name="Henningsen J."/>
            <person name="Johansen P.T."/>
            <person name="Kratchmarova I."/>
            <person name="Kassem M."/>
            <person name="Mann M."/>
            <person name="Olsen J.V."/>
            <person name="Blagoev B."/>
        </authorList>
    </citation>
    <scope>ACETYLATION [LARGE SCALE ANALYSIS] AT ALA-2</scope>
    <scope>PHOSPHORYLATION [LARGE SCALE ANALYSIS] AT SER-4</scope>
    <scope>CLEAVAGE OF INITIATOR METHIONINE [LARGE SCALE ANALYSIS]</scope>
    <scope>IDENTIFICATION BY MASS SPECTROMETRY [LARGE SCALE ANALYSIS]</scope>
</reference>
<reference key="7">
    <citation type="journal article" date="2012" name="Mol. Cell. Proteomics">
        <title>Comparative large-scale characterisation of plant vs. mammal proteins reveals similar and idiosyncratic N-alpha acetylation features.</title>
        <authorList>
            <person name="Bienvenut W.V."/>
            <person name="Sumpton D."/>
            <person name="Martinez A."/>
            <person name="Lilla S."/>
            <person name="Espagne C."/>
            <person name="Meinnel T."/>
            <person name="Giglione C."/>
        </authorList>
    </citation>
    <scope>ACETYLATION [LARGE SCALE ANALYSIS] AT ALA-2</scope>
    <scope>CLEAVAGE OF INITIATOR METHIONINE [LARGE SCALE ANALYSIS]</scope>
    <scope>IDENTIFICATION BY MASS SPECTROMETRY [LARGE SCALE ANALYSIS]</scope>
</reference>
<reference key="8">
    <citation type="journal article" date="2012" name="Proc. Natl. Acad. Sci. U.S.A.">
        <title>N-terminal acetylome analyses and functional insights of the N-terminal acetyltransferase NatB.</title>
        <authorList>
            <person name="Van Damme P."/>
            <person name="Lasa M."/>
            <person name="Polevoda B."/>
            <person name="Gazquez C."/>
            <person name="Elosegui-Artola A."/>
            <person name="Kim D.S."/>
            <person name="De Juan-Pardo E."/>
            <person name="Demeyer K."/>
            <person name="Hole K."/>
            <person name="Larrea E."/>
            <person name="Timmerman E."/>
            <person name="Prieto J."/>
            <person name="Arnesen T."/>
            <person name="Sherman F."/>
            <person name="Gevaert K."/>
            <person name="Aldabe R."/>
        </authorList>
    </citation>
    <scope>ACETYLATION [LARGE SCALE ANALYSIS] AT ALA-2</scope>
    <scope>CLEAVAGE OF INITIATOR METHIONINE [LARGE SCALE ANALYSIS]</scope>
    <scope>IDENTIFICATION BY MASS SPECTROMETRY [LARGE SCALE ANALYSIS]</scope>
</reference>
<reference key="9">
    <citation type="journal article" date="2013" name="J. Proteome Res.">
        <title>Toward a comprehensive characterization of a human cancer cell phosphoproteome.</title>
        <authorList>
            <person name="Zhou H."/>
            <person name="Di Palma S."/>
            <person name="Preisinger C."/>
            <person name="Peng M."/>
            <person name="Polat A.N."/>
            <person name="Heck A.J."/>
            <person name="Mohammed S."/>
        </authorList>
    </citation>
    <scope>IDENTIFICATION BY MASS SPECTROMETRY [LARGE SCALE ANALYSIS]</scope>
    <source>
        <tissue>Erythroleukemia</tissue>
    </source>
</reference>
<reference key="10">
    <citation type="journal article" date="2013" name="Nat. Struct. Mol. Biol.">
        <title>Macrodomain-containing proteins are new mono-ADP-ribosylhydrolases.</title>
        <authorList>
            <person name="Rosenthal F."/>
            <person name="Feijs K.L."/>
            <person name="Frugier E."/>
            <person name="Bonalli M."/>
            <person name="Forst A.H."/>
            <person name="Imhof R."/>
            <person name="Winkler H.C."/>
            <person name="Fischer D."/>
            <person name="Caflisch A."/>
            <person name="Hassa P.O."/>
            <person name="Luescher B."/>
            <person name="Hottiger M.O."/>
        </authorList>
    </citation>
    <scope>FUNCTION</scope>
</reference>
<reference key="11">
    <citation type="journal article" date="2018" name="Sci. Rep.">
        <title>Nucleolar-nucleoplasmic shuttling of TARG1 and its control by DNA damage-induced poly-ADP-ribosylation and by nucleolar transcription.</title>
        <authorList>
            <person name="Buetepage M."/>
            <person name="Preisinger C."/>
            <person name="von Kriegsheim A."/>
            <person name="Scheufen A."/>
            <person name="Lausberg E."/>
            <person name="Li J."/>
            <person name="Kappes F."/>
            <person name="Feederle R."/>
            <person name="Ernst S."/>
            <person name="Eckei L."/>
            <person name="Krieg S."/>
            <person name="Mueller-Newen G."/>
            <person name="Rossetti G."/>
            <person name="Feijs K.L.H."/>
            <person name="Verheugd P."/>
            <person name="Luescher B."/>
        </authorList>
    </citation>
    <scope>SUBCELLULAR LOCATION</scope>
</reference>
<reference key="12">
    <citation type="journal article" date="2019" name="ACS Chem. Biol.">
        <title>The ARH and Macrodomain Families of alpha-ADP-ribose-acceptor Hydrolases Catalyze alpha-NAD+ Hydrolysis.</title>
        <authorList>
            <person name="Stevens L.A."/>
            <person name="Kato J."/>
            <person name="Kasamatsu A."/>
            <person name="Oda H."/>
            <person name="Lee D.Y."/>
            <person name="Moss J."/>
        </authorList>
    </citation>
    <scope>CATALYTIC ACTIVITY</scope>
</reference>
<reference key="13">
    <citation type="submission" date="2007-08" db="PDB data bank">
        <title>Solution structure of the A1PP domain from human protein C6orf130.</title>
        <authorList>
            <consortium name="RIKEN structural genomics initiative (RSGI)"/>
        </authorList>
    </citation>
    <scope>STRUCTURE BY NMR OF 11-152</scope>
</reference>
<reference key="14">
    <citation type="submission" date="2008-04" db="PDB data bank">
        <title>Solution structure of human C6orf130, a putative Macro domain.</title>
        <authorList>
            <consortium name="Center for eukaryotic structural genomics (CESG)"/>
        </authorList>
    </citation>
    <scope>STRUCTURE BY NMR</scope>
</reference>
<reference key="15">
    <citation type="journal article" date="2011" name="J. Biol. Chem.">
        <title>Orphan macrodomain (human C6ORF130) is an o-acyl-ADP-ribose deacylase: solution structure and catalytic properties.</title>
        <authorList>
            <person name="Peterson F.C."/>
            <person name="Chen D."/>
            <person name="Lytle B.L."/>
            <person name="Rossi M.N."/>
            <person name="Ahel I."/>
            <person name="Denu J.M."/>
            <person name="Volkman B.F."/>
        </authorList>
    </citation>
    <scope>STRUCTURE BY NMR IN COMPLEX WITH ADENOSINE-5-DIPHOSPHORIBOSE</scope>
    <scope>FUNCTION</scope>
    <scope>CATALYTIC ACTIVITY</scope>
    <scope>ACTIVE SITE</scope>
    <scope>MUTAGENESIS OF HIS-32; CYS-33; SER-35; THR-83; GLY-123 AND ASP-125</scope>
    <scope>BIOPHYSICOCHEMICAL PROPERTIES</scope>
    <scope>ACTIVITY REGULATION</scope>
</reference>
<reference evidence="11 12 13" key="16">
    <citation type="journal article" date="2013" name="EMBO J.">
        <title>Deficiency of terminal ADP-ribose protein glycohydrolase TARG1/C6orf130 in neurodegenerative disease.</title>
        <authorList>
            <person name="Sharifi R."/>
            <person name="Morra R."/>
            <person name="Appel C.D."/>
            <person name="Tallis M."/>
            <person name="Chioza B."/>
            <person name="Jankevicius G."/>
            <person name="Simpson M.A."/>
            <person name="Matic I."/>
            <person name="Ozkan E."/>
            <person name="Golia B."/>
            <person name="Schellenberg M.J."/>
            <person name="Weston R."/>
            <person name="Williams J.G."/>
            <person name="Rossi M.N."/>
            <person name="Galehdari H."/>
            <person name="Krahn J."/>
            <person name="Wan A."/>
            <person name="Trembath R.C."/>
            <person name="Crosby A.H."/>
            <person name="Ahel D."/>
            <person name="Hay R."/>
            <person name="Ladurner A.G."/>
            <person name="Timinszky G."/>
            <person name="Williams R.S."/>
            <person name="Ahel I."/>
        </authorList>
    </citation>
    <scope>X-RAY CRYSTALLOGRAPHY (1.25 ANGSTROMS) OF 11-152 IN COMPLEX WITH ADP-RIBOSE ANALOGUE</scope>
    <scope>FUNCTION</scope>
    <scope>CATALYTIC ACTIVITY</scope>
    <scope>ACTIVE SITE</scope>
    <scope>TISSUE SPECIFICITY</scope>
    <scope>INVOLVEMENT IN SEVERE NEURODEGENERATION</scope>
    <scope>VARIANT 76-ARG--LEU-152 DEL</scope>
    <scope>MUTAGENESIS OF LYS-84 AND ASP-125</scope>
</reference>
<feature type="initiator methionine" description="Removed" evidence="14 15 16">
    <location>
        <position position="1"/>
    </location>
</feature>
<feature type="chain" id="PRO_0000089529" description="ADP-ribose glycohydrolase OARD1">
    <location>
        <begin position="2"/>
        <end position="152"/>
    </location>
</feature>
<feature type="domain" description="Macro" evidence="1">
    <location>
        <begin position="2"/>
        <end position="152"/>
    </location>
</feature>
<feature type="active site" description="Nucleophile" evidence="4">
    <location>
        <position position="84"/>
    </location>
</feature>
<feature type="active site" description="Proton acceptor" evidence="2 4">
    <location>
        <position position="125"/>
    </location>
</feature>
<feature type="binding site" evidence="2">
    <location>
        <position position="21"/>
    </location>
    <ligand>
        <name>substrate</name>
    </ligand>
</feature>
<feature type="binding site" evidence="2 4">
    <location>
        <begin position="119"/>
        <end position="125"/>
    </location>
    <ligand>
        <name>substrate</name>
    </ligand>
</feature>
<feature type="binding site" evidence="2 4">
    <location>
        <position position="152"/>
    </location>
    <ligand>
        <name>substrate</name>
    </ligand>
</feature>
<feature type="modified residue" description="N-acetylalanine" evidence="14 15 16">
    <location>
        <position position="2"/>
    </location>
</feature>
<feature type="modified residue" description="Phosphoserine" evidence="14">
    <location>
        <position position="4"/>
    </location>
</feature>
<feature type="sequence variant" id="VAR_081206" description="Found in a family with severe neurodegeneration; likely pathogenic." evidence="4">
    <location>
        <begin position="76"/>
        <end position="152"/>
    </location>
</feature>
<feature type="mutagenesis site" description="Abolishes enzyme activity." evidence="2">
    <original>H</original>
    <variation>A</variation>
    <location>
        <position position="32"/>
    </location>
</feature>
<feature type="mutagenesis site" description="No effect." evidence="2">
    <original>C</original>
    <variation>S</variation>
    <location>
        <position position="33"/>
    </location>
</feature>
<feature type="mutagenesis site" description="Reduced catalytic activity. No effect on affinity towards substrate." evidence="2">
    <original>S</original>
    <variation>A</variation>
    <location>
        <position position="35"/>
    </location>
</feature>
<feature type="mutagenesis site" description="Reduced catalytic activity. No effect on affinity towards substrate." evidence="2">
    <original>T</original>
    <variation>A</variation>
    <location>
        <position position="83"/>
    </location>
</feature>
<feature type="mutagenesis site" description="Abolishes enzyme activity and ability to form a stable covalent adduct with the ADP-ribosylated substrate." evidence="4">
    <original>K</original>
    <variation>A</variation>
    <location>
        <position position="84"/>
    </location>
</feature>
<feature type="mutagenesis site" description="Abolishes enzyme activity." evidence="2">
    <original>G</original>
    <variation>E</variation>
    <location>
        <position position="123"/>
    </location>
</feature>
<feature type="mutagenesis site" description="Abolishes enzyme activity without affecting ability to form a stable covalent adduct with the ADP-ribosylated substrate." evidence="2 4">
    <original>D</original>
    <variation>A</variation>
    <location>
        <position position="125"/>
    </location>
</feature>
<feature type="strand" evidence="19">
    <location>
        <begin position="14"/>
        <end position="19"/>
    </location>
</feature>
<feature type="helix" evidence="19">
    <location>
        <begin position="21"/>
        <end position="23"/>
    </location>
</feature>
<feature type="strand" evidence="19">
    <location>
        <begin position="28"/>
        <end position="35"/>
    </location>
</feature>
<feature type="strand" evidence="17">
    <location>
        <begin position="41"/>
        <end position="43"/>
    </location>
</feature>
<feature type="helix" evidence="19">
    <location>
        <begin position="45"/>
        <end position="52"/>
    </location>
</feature>
<feature type="helix" evidence="19">
    <location>
        <begin position="55"/>
        <end position="61"/>
    </location>
</feature>
<feature type="strand" evidence="19">
    <location>
        <begin position="67"/>
        <end position="73"/>
    </location>
</feature>
<feature type="strand" evidence="19">
    <location>
        <begin position="76"/>
        <end position="86"/>
    </location>
</feature>
<feature type="helix" evidence="19">
    <location>
        <begin position="93"/>
        <end position="110"/>
    </location>
</feature>
<feature type="strand" evidence="19">
    <location>
        <begin position="114"/>
        <end position="117"/>
    </location>
</feature>
<feature type="helix" evidence="18">
    <location>
        <begin position="123"/>
        <end position="125"/>
    </location>
</feature>
<feature type="helix" evidence="19">
    <location>
        <begin position="129"/>
        <end position="140"/>
    </location>
</feature>
<feature type="strand" evidence="19">
    <location>
        <begin position="146"/>
        <end position="151"/>
    </location>
</feature>